<gene>
    <name evidence="1" type="primary">cca</name>
    <name type="ordered locus">azo0493</name>
</gene>
<sequence length="412" mass="45080">MRTYVVGGAVRDALLGLPVKDRDWVVVGATPDEMLARGFRPVGKDFPVFLHPQTQEEHALARTERKTGRGYAGFAFHTAPDVTLEEDLARRDLTINAIARDADGTLIDPYGGVADLHGRVFRHVSPAFAEDPVRILRVARFAARFADFSVAPETLALMRAMVDNGEVDHLVAERVWQEFARGLMEAHPARMIRVLRDCGALARLLPELDRLFGVPQPAQHHPEIDTGEHVLMVVEQAAARAHSLPVRWATLLHDLGKGETPAAILPHHYGHEARSADLARQVSERLKAPVDCRDLAVMVAREHGILAQAAVLRAETMVKVLERCDALRRPERFALMLEAAACDHLGRGGERPENWAPAAQWQAALAAVRSVEAGAIARACADKAQVPQRIHAARVAAVKALRAHPPPAEGIS</sequence>
<comment type="function">
    <text evidence="1">Catalyzes the addition and repair of the essential 3'-terminal CCA sequence in tRNAs without using a nucleic acid template. Adds these three nucleotides in the order of C, C, and A to the tRNA nucleotide-73, using CTP and ATP as substrates and producing inorganic pyrophosphate. tRNA 3'-terminal CCA addition is required both for tRNA processing and repair. Also involved in tRNA surveillance by mediating tandem CCA addition to generate a CCACCA at the 3' terminus of unstable tRNAs. While stable tRNAs receive only 3'-terminal CCA, unstable tRNAs are marked with CCACCA and rapidly degraded.</text>
</comment>
<comment type="catalytic activity">
    <reaction evidence="1">
        <text>a tRNA precursor + 2 CTP + ATP = a tRNA with a 3' CCA end + 3 diphosphate</text>
        <dbReference type="Rhea" id="RHEA:14433"/>
        <dbReference type="Rhea" id="RHEA-COMP:10465"/>
        <dbReference type="Rhea" id="RHEA-COMP:10468"/>
        <dbReference type="ChEBI" id="CHEBI:30616"/>
        <dbReference type="ChEBI" id="CHEBI:33019"/>
        <dbReference type="ChEBI" id="CHEBI:37563"/>
        <dbReference type="ChEBI" id="CHEBI:74896"/>
        <dbReference type="ChEBI" id="CHEBI:83071"/>
        <dbReference type="EC" id="2.7.7.72"/>
    </reaction>
</comment>
<comment type="catalytic activity">
    <reaction evidence="1">
        <text>a tRNA with a 3' CCA end + 2 CTP + ATP = a tRNA with a 3' CCACCA end + 3 diphosphate</text>
        <dbReference type="Rhea" id="RHEA:76235"/>
        <dbReference type="Rhea" id="RHEA-COMP:10468"/>
        <dbReference type="Rhea" id="RHEA-COMP:18655"/>
        <dbReference type="ChEBI" id="CHEBI:30616"/>
        <dbReference type="ChEBI" id="CHEBI:33019"/>
        <dbReference type="ChEBI" id="CHEBI:37563"/>
        <dbReference type="ChEBI" id="CHEBI:83071"/>
        <dbReference type="ChEBI" id="CHEBI:195187"/>
    </reaction>
    <physiologicalReaction direction="left-to-right" evidence="1">
        <dbReference type="Rhea" id="RHEA:76236"/>
    </physiologicalReaction>
</comment>
<comment type="cofactor">
    <cofactor evidence="1">
        <name>Mg(2+)</name>
        <dbReference type="ChEBI" id="CHEBI:18420"/>
    </cofactor>
    <text evidence="1">Magnesium is required for nucleotidyltransferase activity.</text>
</comment>
<comment type="cofactor">
    <cofactor evidence="1">
        <name>Ni(2+)</name>
        <dbReference type="ChEBI" id="CHEBI:49786"/>
    </cofactor>
    <text evidence="1">Nickel for phosphatase activity.</text>
</comment>
<comment type="subunit">
    <text evidence="1">Monomer. Can also form homodimers and oligomers.</text>
</comment>
<comment type="domain">
    <text evidence="1">Comprises two domains: an N-terminal domain containing the nucleotidyltransferase activity and a C-terminal HD domain associated with both phosphodiesterase and phosphatase activities.</text>
</comment>
<comment type="miscellaneous">
    <text evidence="1">A single active site specifically recognizes both ATP and CTP and is responsible for their addition.</text>
</comment>
<comment type="similarity">
    <text evidence="1">Belongs to the tRNA nucleotidyltransferase/poly(A) polymerase family. Bacterial CCA-adding enzyme type 1 subfamily.</text>
</comment>
<keyword id="KW-0067">ATP-binding</keyword>
<keyword id="KW-0378">Hydrolase</keyword>
<keyword id="KW-0460">Magnesium</keyword>
<keyword id="KW-0479">Metal-binding</keyword>
<keyword id="KW-0511">Multifunctional enzyme</keyword>
<keyword id="KW-0533">Nickel</keyword>
<keyword id="KW-0547">Nucleotide-binding</keyword>
<keyword id="KW-0548">Nucleotidyltransferase</keyword>
<keyword id="KW-1185">Reference proteome</keyword>
<keyword id="KW-0692">RNA repair</keyword>
<keyword id="KW-0694">RNA-binding</keyword>
<keyword id="KW-0808">Transferase</keyword>
<keyword id="KW-0819">tRNA processing</keyword>
<name>CCA_AZOSB</name>
<accession>A1K2Q5</accession>
<feature type="chain" id="PRO_1000054248" description="Multifunctional CCA protein">
    <location>
        <begin position="1"/>
        <end position="412"/>
    </location>
</feature>
<feature type="domain" description="HD" evidence="1">
    <location>
        <begin position="226"/>
        <end position="327"/>
    </location>
</feature>
<feature type="binding site" evidence="1">
    <location>
        <position position="8"/>
    </location>
    <ligand>
        <name>ATP</name>
        <dbReference type="ChEBI" id="CHEBI:30616"/>
    </ligand>
</feature>
<feature type="binding site" evidence="1">
    <location>
        <position position="8"/>
    </location>
    <ligand>
        <name>CTP</name>
        <dbReference type="ChEBI" id="CHEBI:37563"/>
    </ligand>
</feature>
<feature type="binding site" evidence="1">
    <location>
        <position position="11"/>
    </location>
    <ligand>
        <name>ATP</name>
        <dbReference type="ChEBI" id="CHEBI:30616"/>
    </ligand>
</feature>
<feature type="binding site" evidence="1">
    <location>
        <position position="11"/>
    </location>
    <ligand>
        <name>CTP</name>
        <dbReference type="ChEBI" id="CHEBI:37563"/>
    </ligand>
</feature>
<feature type="binding site" evidence="1">
    <location>
        <position position="21"/>
    </location>
    <ligand>
        <name>Mg(2+)</name>
        <dbReference type="ChEBI" id="CHEBI:18420"/>
    </ligand>
</feature>
<feature type="binding site" evidence="1">
    <location>
        <position position="23"/>
    </location>
    <ligand>
        <name>Mg(2+)</name>
        <dbReference type="ChEBI" id="CHEBI:18420"/>
    </ligand>
</feature>
<feature type="binding site" evidence="1">
    <location>
        <position position="91"/>
    </location>
    <ligand>
        <name>ATP</name>
        <dbReference type="ChEBI" id="CHEBI:30616"/>
    </ligand>
</feature>
<feature type="binding site" evidence="1">
    <location>
        <position position="91"/>
    </location>
    <ligand>
        <name>CTP</name>
        <dbReference type="ChEBI" id="CHEBI:37563"/>
    </ligand>
</feature>
<feature type="binding site" evidence="1">
    <location>
        <position position="137"/>
    </location>
    <ligand>
        <name>ATP</name>
        <dbReference type="ChEBI" id="CHEBI:30616"/>
    </ligand>
</feature>
<feature type="binding site" evidence="1">
    <location>
        <position position="137"/>
    </location>
    <ligand>
        <name>CTP</name>
        <dbReference type="ChEBI" id="CHEBI:37563"/>
    </ligand>
</feature>
<feature type="binding site" evidence="1">
    <location>
        <position position="140"/>
    </location>
    <ligand>
        <name>ATP</name>
        <dbReference type="ChEBI" id="CHEBI:30616"/>
    </ligand>
</feature>
<feature type="binding site" evidence="1">
    <location>
        <position position="140"/>
    </location>
    <ligand>
        <name>CTP</name>
        <dbReference type="ChEBI" id="CHEBI:37563"/>
    </ligand>
</feature>
<protein>
    <recommendedName>
        <fullName evidence="1">Multifunctional CCA protein</fullName>
    </recommendedName>
    <domain>
        <recommendedName>
            <fullName evidence="1">CCA-adding enzyme</fullName>
            <ecNumber evidence="1">2.7.7.72</ecNumber>
        </recommendedName>
        <alternativeName>
            <fullName evidence="1">CCA tRNA nucleotidyltransferase</fullName>
        </alternativeName>
        <alternativeName>
            <fullName evidence="1">tRNA CCA-pyrophosphorylase</fullName>
        </alternativeName>
        <alternativeName>
            <fullName evidence="1">tRNA adenylyl-/cytidylyl-transferase</fullName>
        </alternativeName>
        <alternativeName>
            <fullName evidence="1">tRNA nucleotidyltransferase</fullName>
        </alternativeName>
        <alternativeName>
            <fullName evidence="1">tRNA-NT</fullName>
        </alternativeName>
    </domain>
    <domain>
        <recommendedName>
            <fullName evidence="1">2'-nucleotidase</fullName>
            <ecNumber evidence="1">3.1.3.-</ecNumber>
        </recommendedName>
    </domain>
    <domain>
        <recommendedName>
            <fullName evidence="1">2',3'-cyclic phosphodiesterase</fullName>
            <ecNumber evidence="1">3.1.4.-</ecNumber>
        </recommendedName>
    </domain>
    <domain>
        <recommendedName>
            <fullName evidence="1">Phosphatase</fullName>
            <ecNumber evidence="1">3.1.3.-</ecNumber>
        </recommendedName>
    </domain>
</protein>
<proteinExistence type="inferred from homology"/>
<dbReference type="EC" id="2.7.7.72" evidence="1"/>
<dbReference type="EC" id="3.1.3.-" evidence="1"/>
<dbReference type="EC" id="3.1.4.-" evidence="1"/>
<dbReference type="EMBL" id="AM406670">
    <property type="protein sequence ID" value="CAL93110.1"/>
    <property type="molecule type" value="Genomic_DNA"/>
</dbReference>
<dbReference type="RefSeq" id="WP_011764228.1">
    <property type="nucleotide sequence ID" value="NC_008702.1"/>
</dbReference>
<dbReference type="SMR" id="A1K2Q5"/>
<dbReference type="STRING" id="62928.azo0493"/>
<dbReference type="KEGG" id="azo:azo0493"/>
<dbReference type="eggNOG" id="COG0617">
    <property type="taxonomic scope" value="Bacteria"/>
</dbReference>
<dbReference type="HOGENOM" id="CLU_015961_1_1_4"/>
<dbReference type="Proteomes" id="UP000002588">
    <property type="component" value="Chromosome"/>
</dbReference>
<dbReference type="GO" id="GO:0005524">
    <property type="term" value="F:ATP binding"/>
    <property type="evidence" value="ECO:0007669"/>
    <property type="project" value="UniProtKB-UniRule"/>
</dbReference>
<dbReference type="GO" id="GO:0004810">
    <property type="term" value="F:CCA tRNA nucleotidyltransferase activity"/>
    <property type="evidence" value="ECO:0007669"/>
    <property type="project" value="UniProtKB-UniRule"/>
</dbReference>
<dbReference type="GO" id="GO:0004112">
    <property type="term" value="F:cyclic-nucleotide phosphodiesterase activity"/>
    <property type="evidence" value="ECO:0007669"/>
    <property type="project" value="UniProtKB-UniRule"/>
</dbReference>
<dbReference type="GO" id="GO:0000287">
    <property type="term" value="F:magnesium ion binding"/>
    <property type="evidence" value="ECO:0007669"/>
    <property type="project" value="UniProtKB-UniRule"/>
</dbReference>
<dbReference type="GO" id="GO:0016791">
    <property type="term" value="F:phosphatase activity"/>
    <property type="evidence" value="ECO:0007669"/>
    <property type="project" value="UniProtKB-UniRule"/>
</dbReference>
<dbReference type="GO" id="GO:0000049">
    <property type="term" value="F:tRNA binding"/>
    <property type="evidence" value="ECO:0007669"/>
    <property type="project" value="UniProtKB-UniRule"/>
</dbReference>
<dbReference type="GO" id="GO:0042245">
    <property type="term" value="P:RNA repair"/>
    <property type="evidence" value="ECO:0007669"/>
    <property type="project" value="UniProtKB-KW"/>
</dbReference>
<dbReference type="GO" id="GO:0001680">
    <property type="term" value="P:tRNA 3'-terminal CCA addition"/>
    <property type="evidence" value="ECO:0007669"/>
    <property type="project" value="UniProtKB-UniRule"/>
</dbReference>
<dbReference type="CDD" id="cd00077">
    <property type="entry name" value="HDc"/>
    <property type="match status" value="1"/>
</dbReference>
<dbReference type="CDD" id="cd05398">
    <property type="entry name" value="NT_ClassII-CCAase"/>
    <property type="match status" value="1"/>
</dbReference>
<dbReference type="Gene3D" id="3.30.460.10">
    <property type="entry name" value="Beta Polymerase, domain 2"/>
    <property type="match status" value="1"/>
</dbReference>
<dbReference type="Gene3D" id="1.10.3090.10">
    <property type="entry name" value="cca-adding enzyme, domain 2"/>
    <property type="match status" value="1"/>
</dbReference>
<dbReference type="HAMAP" id="MF_01261">
    <property type="entry name" value="CCA_bact_type1"/>
    <property type="match status" value="1"/>
</dbReference>
<dbReference type="HAMAP" id="MF_01262">
    <property type="entry name" value="CCA_bact_type2"/>
    <property type="match status" value="1"/>
</dbReference>
<dbReference type="InterPro" id="IPR012006">
    <property type="entry name" value="CCA_bact"/>
</dbReference>
<dbReference type="InterPro" id="IPR003607">
    <property type="entry name" value="HD/PDEase_dom"/>
</dbReference>
<dbReference type="InterPro" id="IPR006674">
    <property type="entry name" value="HD_domain"/>
</dbReference>
<dbReference type="InterPro" id="IPR043519">
    <property type="entry name" value="NT_sf"/>
</dbReference>
<dbReference type="InterPro" id="IPR002646">
    <property type="entry name" value="PolA_pol_head_dom"/>
</dbReference>
<dbReference type="InterPro" id="IPR032828">
    <property type="entry name" value="PolyA_RNA-bd"/>
</dbReference>
<dbReference type="InterPro" id="IPR050124">
    <property type="entry name" value="tRNA_CCA-adding_enzyme"/>
</dbReference>
<dbReference type="NCBIfam" id="NF008137">
    <property type="entry name" value="PRK10885.1"/>
    <property type="match status" value="1"/>
</dbReference>
<dbReference type="PANTHER" id="PTHR47545">
    <property type="entry name" value="MULTIFUNCTIONAL CCA PROTEIN"/>
    <property type="match status" value="1"/>
</dbReference>
<dbReference type="PANTHER" id="PTHR47545:SF1">
    <property type="entry name" value="MULTIFUNCTIONAL CCA PROTEIN"/>
    <property type="match status" value="1"/>
</dbReference>
<dbReference type="Pfam" id="PF01966">
    <property type="entry name" value="HD"/>
    <property type="match status" value="1"/>
</dbReference>
<dbReference type="Pfam" id="PF01743">
    <property type="entry name" value="PolyA_pol"/>
    <property type="match status" value="1"/>
</dbReference>
<dbReference type="Pfam" id="PF12627">
    <property type="entry name" value="PolyA_pol_RNAbd"/>
    <property type="match status" value="1"/>
</dbReference>
<dbReference type="PIRSF" id="PIRSF000813">
    <property type="entry name" value="CCA_bact"/>
    <property type="match status" value="1"/>
</dbReference>
<dbReference type="SUPFAM" id="SSF81301">
    <property type="entry name" value="Nucleotidyltransferase"/>
    <property type="match status" value="1"/>
</dbReference>
<dbReference type="SUPFAM" id="SSF81891">
    <property type="entry name" value="Poly A polymerase C-terminal region-like"/>
    <property type="match status" value="1"/>
</dbReference>
<dbReference type="PROSITE" id="PS51831">
    <property type="entry name" value="HD"/>
    <property type="match status" value="1"/>
</dbReference>
<evidence type="ECO:0000255" key="1">
    <source>
        <dbReference type="HAMAP-Rule" id="MF_01261"/>
    </source>
</evidence>
<organism>
    <name type="scientific">Azoarcus sp. (strain BH72)</name>
    <dbReference type="NCBI Taxonomy" id="418699"/>
    <lineage>
        <taxon>Bacteria</taxon>
        <taxon>Pseudomonadati</taxon>
        <taxon>Pseudomonadota</taxon>
        <taxon>Betaproteobacteria</taxon>
        <taxon>Rhodocyclales</taxon>
        <taxon>Zoogloeaceae</taxon>
        <taxon>Azoarcus</taxon>
    </lineage>
</organism>
<reference key="1">
    <citation type="journal article" date="2006" name="Nat. Biotechnol.">
        <title>Complete genome of the mutualistic, N2-fixing grass endophyte Azoarcus sp. strain BH72.</title>
        <authorList>
            <person name="Krause A."/>
            <person name="Ramakumar A."/>
            <person name="Bartels D."/>
            <person name="Battistoni F."/>
            <person name="Bekel T."/>
            <person name="Boch J."/>
            <person name="Boehm M."/>
            <person name="Friedrich F."/>
            <person name="Hurek T."/>
            <person name="Krause L."/>
            <person name="Linke B."/>
            <person name="McHardy A.C."/>
            <person name="Sarkar A."/>
            <person name="Schneiker S."/>
            <person name="Syed A.A."/>
            <person name="Thauer R."/>
            <person name="Vorhoelter F.-J."/>
            <person name="Weidner S."/>
            <person name="Puehler A."/>
            <person name="Reinhold-Hurek B."/>
            <person name="Kaiser O."/>
            <person name="Goesmann A."/>
        </authorList>
    </citation>
    <scope>NUCLEOTIDE SEQUENCE [LARGE SCALE GENOMIC DNA]</scope>
    <source>
        <strain>BH72</strain>
    </source>
</reference>